<organism>
    <name type="scientific">Thermococcus gammatolerans (strain DSM 15229 / JCM 11827 / EJ3)</name>
    <dbReference type="NCBI Taxonomy" id="593117"/>
    <lineage>
        <taxon>Archaea</taxon>
        <taxon>Methanobacteriati</taxon>
        <taxon>Methanobacteriota</taxon>
        <taxon>Thermococci</taxon>
        <taxon>Thermococcales</taxon>
        <taxon>Thermococcaceae</taxon>
        <taxon>Thermococcus</taxon>
    </lineage>
</organism>
<dbReference type="EC" id="6.1.1.22" evidence="1"/>
<dbReference type="EMBL" id="CP001398">
    <property type="protein sequence ID" value="ACS33230.1"/>
    <property type="molecule type" value="Genomic_DNA"/>
</dbReference>
<dbReference type="RefSeq" id="WP_015858348.1">
    <property type="nucleotide sequence ID" value="NC_012804.1"/>
</dbReference>
<dbReference type="SMR" id="C5A4R8"/>
<dbReference type="STRING" id="593117.TGAM_0728"/>
<dbReference type="PaxDb" id="593117-TGAM_0728"/>
<dbReference type="GeneID" id="7987702"/>
<dbReference type="KEGG" id="tga:TGAM_0728"/>
<dbReference type="PATRIC" id="fig|593117.10.peg.728"/>
<dbReference type="eggNOG" id="arCOG00407">
    <property type="taxonomic scope" value="Archaea"/>
</dbReference>
<dbReference type="HOGENOM" id="CLU_004553_2_0_2"/>
<dbReference type="OrthoDB" id="5908at2157"/>
<dbReference type="Proteomes" id="UP000001488">
    <property type="component" value="Chromosome"/>
</dbReference>
<dbReference type="GO" id="GO:0005737">
    <property type="term" value="C:cytoplasm"/>
    <property type="evidence" value="ECO:0007669"/>
    <property type="project" value="UniProtKB-SubCell"/>
</dbReference>
<dbReference type="GO" id="GO:0004816">
    <property type="term" value="F:asparagine-tRNA ligase activity"/>
    <property type="evidence" value="ECO:0007669"/>
    <property type="project" value="UniProtKB-UniRule"/>
</dbReference>
<dbReference type="GO" id="GO:0005524">
    <property type="term" value="F:ATP binding"/>
    <property type="evidence" value="ECO:0007669"/>
    <property type="project" value="UniProtKB-UniRule"/>
</dbReference>
<dbReference type="GO" id="GO:0003676">
    <property type="term" value="F:nucleic acid binding"/>
    <property type="evidence" value="ECO:0007669"/>
    <property type="project" value="InterPro"/>
</dbReference>
<dbReference type="GO" id="GO:0006421">
    <property type="term" value="P:asparaginyl-tRNA aminoacylation"/>
    <property type="evidence" value="ECO:0007669"/>
    <property type="project" value="UniProtKB-UniRule"/>
</dbReference>
<dbReference type="CDD" id="cd00776">
    <property type="entry name" value="AsxRS_core"/>
    <property type="match status" value="1"/>
</dbReference>
<dbReference type="CDD" id="cd04319">
    <property type="entry name" value="PhAsnRS_like_N"/>
    <property type="match status" value="1"/>
</dbReference>
<dbReference type="Gene3D" id="3.30.930.10">
    <property type="entry name" value="Bira Bifunctional Protein, Domain 2"/>
    <property type="match status" value="1"/>
</dbReference>
<dbReference type="Gene3D" id="2.40.50.140">
    <property type="entry name" value="Nucleic acid-binding proteins"/>
    <property type="match status" value="1"/>
</dbReference>
<dbReference type="HAMAP" id="MF_00534">
    <property type="entry name" value="Asn_tRNA_synth"/>
    <property type="match status" value="1"/>
</dbReference>
<dbReference type="InterPro" id="IPR004364">
    <property type="entry name" value="Aa-tRNA-synt_II"/>
</dbReference>
<dbReference type="InterPro" id="IPR006195">
    <property type="entry name" value="aa-tRNA-synth_II"/>
</dbReference>
<dbReference type="InterPro" id="IPR045864">
    <property type="entry name" value="aa-tRNA-synth_II/BPL/LPL"/>
</dbReference>
<dbReference type="InterPro" id="IPR004522">
    <property type="entry name" value="Asn-tRNA-ligase"/>
</dbReference>
<dbReference type="InterPro" id="IPR002312">
    <property type="entry name" value="Asp/Asn-tRNA-synth_IIb"/>
</dbReference>
<dbReference type="InterPro" id="IPR012340">
    <property type="entry name" value="NA-bd_OB-fold"/>
</dbReference>
<dbReference type="InterPro" id="IPR004365">
    <property type="entry name" value="NA-bd_OB_tRNA"/>
</dbReference>
<dbReference type="NCBIfam" id="TIGR00457">
    <property type="entry name" value="asnS"/>
    <property type="match status" value="1"/>
</dbReference>
<dbReference type="NCBIfam" id="NF003037">
    <property type="entry name" value="PRK03932.1"/>
    <property type="match status" value="1"/>
</dbReference>
<dbReference type="NCBIfam" id="NF003483">
    <property type="entry name" value="PRK05159.1"/>
    <property type="match status" value="1"/>
</dbReference>
<dbReference type="PANTHER" id="PTHR22594:SF34">
    <property type="entry name" value="ASPARAGINE--TRNA LIGASE, MITOCHONDRIAL-RELATED"/>
    <property type="match status" value="1"/>
</dbReference>
<dbReference type="PANTHER" id="PTHR22594">
    <property type="entry name" value="ASPARTYL/LYSYL-TRNA SYNTHETASE"/>
    <property type="match status" value="1"/>
</dbReference>
<dbReference type="Pfam" id="PF00152">
    <property type="entry name" value="tRNA-synt_2"/>
    <property type="match status" value="1"/>
</dbReference>
<dbReference type="Pfam" id="PF01336">
    <property type="entry name" value="tRNA_anti-codon"/>
    <property type="match status" value="1"/>
</dbReference>
<dbReference type="PRINTS" id="PR01042">
    <property type="entry name" value="TRNASYNTHASP"/>
</dbReference>
<dbReference type="SUPFAM" id="SSF55681">
    <property type="entry name" value="Class II aaRS and biotin synthetases"/>
    <property type="match status" value="1"/>
</dbReference>
<dbReference type="SUPFAM" id="SSF50249">
    <property type="entry name" value="Nucleic acid-binding proteins"/>
    <property type="match status" value="1"/>
</dbReference>
<dbReference type="PROSITE" id="PS50862">
    <property type="entry name" value="AA_TRNA_LIGASE_II"/>
    <property type="match status" value="1"/>
</dbReference>
<protein>
    <recommendedName>
        <fullName evidence="1">Asparagine--tRNA ligase</fullName>
        <ecNumber evidence="1">6.1.1.22</ecNumber>
    </recommendedName>
    <alternativeName>
        <fullName evidence="1">Asparaginyl-tRNA synthetase</fullName>
        <shortName evidence="1">AsnRS</shortName>
    </alternativeName>
</protein>
<comment type="catalytic activity">
    <reaction evidence="1">
        <text>tRNA(Asn) + L-asparagine + ATP = L-asparaginyl-tRNA(Asn) + AMP + diphosphate + H(+)</text>
        <dbReference type="Rhea" id="RHEA:11180"/>
        <dbReference type="Rhea" id="RHEA-COMP:9659"/>
        <dbReference type="Rhea" id="RHEA-COMP:9674"/>
        <dbReference type="ChEBI" id="CHEBI:15378"/>
        <dbReference type="ChEBI" id="CHEBI:30616"/>
        <dbReference type="ChEBI" id="CHEBI:33019"/>
        <dbReference type="ChEBI" id="CHEBI:58048"/>
        <dbReference type="ChEBI" id="CHEBI:78442"/>
        <dbReference type="ChEBI" id="CHEBI:78515"/>
        <dbReference type="ChEBI" id="CHEBI:456215"/>
        <dbReference type="EC" id="6.1.1.22"/>
    </reaction>
</comment>
<comment type="subcellular location">
    <subcellularLocation>
        <location evidence="1">Cytoplasm</location>
    </subcellularLocation>
</comment>
<comment type="similarity">
    <text evidence="1">Belongs to the class-II aminoacyl-tRNA synthetase family.</text>
</comment>
<accession>C5A4R8</accession>
<evidence type="ECO:0000255" key="1">
    <source>
        <dbReference type="HAMAP-Rule" id="MF_00534"/>
    </source>
</evidence>
<feature type="chain" id="PRO_1000211907" description="Asparagine--tRNA ligase">
    <location>
        <begin position="1"/>
        <end position="430"/>
    </location>
</feature>
<gene>
    <name evidence="1" type="primary">asnS</name>
    <name type="ordered locus">TGAM_0728</name>
</gene>
<proteinExistence type="inferred from homology"/>
<name>SYN_THEGJ</name>
<keyword id="KW-0030">Aminoacyl-tRNA synthetase</keyword>
<keyword id="KW-0067">ATP-binding</keyword>
<keyword id="KW-0963">Cytoplasm</keyword>
<keyword id="KW-0436">Ligase</keyword>
<keyword id="KW-0547">Nucleotide-binding</keyword>
<keyword id="KW-0648">Protein biosynthesis</keyword>
<keyword id="KW-1185">Reference proteome</keyword>
<sequence length="430" mass="49646">MIDKVYCADVKPEMEGKRVKLAGWVYRKREVGKKVFIVLRDSSGIVQVVFSKELNEEAYREAKKLGIESSVIIEGTVKADPRAPTGAEVQADKLQVIQNVDFFPITKDASPEFLLDVRHLHLRSPKVASIMKVKGTLMQAAREWLLQDGWYEVFPPILVTGAVEGGSTLFKLKYFDKTAYLSQSAQLYLEAAIFGLEKVWSLTPSFRAEKSRTRRHLTEFWHLELEAAWMDLWDIMKVEEELVSYMVQRTLELRRSEIETFRKDLTTLKNAVPPFPRISYDEAIDILQSKGVEIEWGEDMGADEERVLTEEFEAPFFVYGYPKHIKAFYMKEDPEDPRKVLAADMLAPEGYGEIIGGSQREDNYDKLIQRILEEGMDPKDYEWYLDLRKYGSVPHSGFGLGLERLVAWVLKLDHVRWATLFPRTPSRLYP</sequence>
<reference key="1">
    <citation type="journal article" date="2007" name="Genome Biol.">
        <title>Genome analysis and genome-wide proteomics of Thermococcus gammatolerans, the most radioresistant organism known amongst the Archaea.</title>
        <authorList>
            <person name="Zivanovic Y."/>
            <person name="Armengaud J."/>
            <person name="Lagorce A."/>
            <person name="Leplat C."/>
            <person name="Guerin P."/>
            <person name="Dutertre M."/>
            <person name="Anthouard V."/>
            <person name="Forterre P."/>
            <person name="Wincker P."/>
            <person name="Confalonieri F."/>
        </authorList>
    </citation>
    <scope>NUCLEOTIDE SEQUENCE [LARGE SCALE GENOMIC DNA]</scope>
    <source>
        <strain>DSM 15229 / JCM 11827 / EJ3</strain>
    </source>
</reference>